<proteinExistence type="inferred from homology"/>
<comment type="function">
    <text evidence="1">F(1)F(0) ATP synthase produces ATP from ADP in the presence of a proton or sodium gradient. F-type ATPases consist of two structural domains, F(1) containing the extramembraneous catalytic core and F(0) containing the membrane proton channel, linked together by a central stalk and a peripheral stalk. During catalysis, ATP synthesis in the catalytic domain of F(1) is coupled via a rotary mechanism of the central stalk subunits to proton translocation.</text>
</comment>
<comment type="function">
    <text evidence="1">Component of the F(0) channel, it forms part of the peripheral stalk, linking F(1) to F(0).</text>
</comment>
<comment type="subunit">
    <text evidence="1">F-type ATPases have 2 components, F(1) - the catalytic core - and F(0) - the membrane proton channel. F(1) has five subunits: alpha(3), beta(3), gamma(1), delta(1), epsilon(1). F(0) has three main subunits: a(1), b(2) and c(10-14). The alpha and beta chains form an alternating ring which encloses part of the gamma chain. F(1) is attached to F(0) by a central stalk formed by the gamma and epsilon chains, while a peripheral stalk is formed by the delta and b chains.</text>
</comment>
<comment type="subcellular location">
    <subcellularLocation>
        <location evidence="1">Cell inner membrane</location>
        <topology evidence="1">Single-pass membrane protein</topology>
    </subcellularLocation>
</comment>
<comment type="similarity">
    <text evidence="1">Belongs to the ATPase B chain family.</text>
</comment>
<sequence>MNFNATLIGQSVAFLIFVWFCMKFVWPPLMNAIEERQKRIADGLADADRAVKDLELARSKATDQLKEAKATANEIIEQANKRKAQIVDEAKAEADAERAKIIAQGKAEIEAERNRVKEDLRKQVATLAILGAEKILERSIDPAAHSDIVNKLVAEI</sequence>
<evidence type="ECO:0000255" key="1">
    <source>
        <dbReference type="HAMAP-Rule" id="MF_01398"/>
    </source>
</evidence>
<name>ATPF_SHEDO</name>
<accession>Q12HP7</accession>
<gene>
    <name evidence="1" type="primary">atpF</name>
    <name type="ordered locus">Sden_3756</name>
</gene>
<feature type="chain" id="PRO_0000368757" description="ATP synthase subunit b">
    <location>
        <begin position="1"/>
        <end position="156"/>
    </location>
</feature>
<feature type="transmembrane region" description="Helical" evidence="1">
    <location>
        <begin position="7"/>
        <end position="29"/>
    </location>
</feature>
<organism>
    <name type="scientific">Shewanella denitrificans (strain OS217 / ATCC BAA-1090 / DSM 15013)</name>
    <dbReference type="NCBI Taxonomy" id="318161"/>
    <lineage>
        <taxon>Bacteria</taxon>
        <taxon>Pseudomonadati</taxon>
        <taxon>Pseudomonadota</taxon>
        <taxon>Gammaproteobacteria</taxon>
        <taxon>Alteromonadales</taxon>
        <taxon>Shewanellaceae</taxon>
        <taxon>Shewanella</taxon>
    </lineage>
</organism>
<reference key="1">
    <citation type="submission" date="2006-03" db="EMBL/GenBank/DDBJ databases">
        <title>Complete sequence of Shewanella denitrificans OS217.</title>
        <authorList>
            <consortium name="US DOE Joint Genome Institute"/>
            <person name="Copeland A."/>
            <person name="Lucas S."/>
            <person name="Lapidus A."/>
            <person name="Barry K."/>
            <person name="Detter J.C."/>
            <person name="Glavina del Rio T."/>
            <person name="Hammon N."/>
            <person name="Israni S."/>
            <person name="Dalin E."/>
            <person name="Tice H."/>
            <person name="Pitluck S."/>
            <person name="Brettin T."/>
            <person name="Bruce D."/>
            <person name="Han C."/>
            <person name="Tapia R."/>
            <person name="Gilna P."/>
            <person name="Kiss H."/>
            <person name="Schmutz J."/>
            <person name="Larimer F."/>
            <person name="Land M."/>
            <person name="Hauser L."/>
            <person name="Kyrpides N."/>
            <person name="Lykidis A."/>
            <person name="Richardson P."/>
        </authorList>
    </citation>
    <scope>NUCLEOTIDE SEQUENCE [LARGE SCALE GENOMIC DNA]</scope>
    <source>
        <strain>OS217 / ATCC BAA-1090 / DSM 15013</strain>
    </source>
</reference>
<keyword id="KW-0066">ATP synthesis</keyword>
<keyword id="KW-0997">Cell inner membrane</keyword>
<keyword id="KW-1003">Cell membrane</keyword>
<keyword id="KW-0138">CF(0)</keyword>
<keyword id="KW-0375">Hydrogen ion transport</keyword>
<keyword id="KW-0406">Ion transport</keyword>
<keyword id="KW-0472">Membrane</keyword>
<keyword id="KW-1185">Reference proteome</keyword>
<keyword id="KW-0812">Transmembrane</keyword>
<keyword id="KW-1133">Transmembrane helix</keyword>
<keyword id="KW-0813">Transport</keyword>
<protein>
    <recommendedName>
        <fullName evidence="1">ATP synthase subunit b</fullName>
    </recommendedName>
    <alternativeName>
        <fullName evidence="1">ATP synthase F(0) sector subunit b</fullName>
    </alternativeName>
    <alternativeName>
        <fullName evidence="1">ATPase subunit I</fullName>
    </alternativeName>
    <alternativeName>
        <fullName evidence="1">F-type ATPase subunit b</fullName>
        <shortName evidence="1">F-ATPase subunit b</shortName>
    </alternativeName>
</protein>
<dbReference type="EMBL" id="CP000302">
    <property type="protein sequence ID" value="ABE57029.1"/>
    <property type="molecule type" value="Genomic_DNA"/>
</dbReference>
<dbReference type="RefSeq" id="WP_011498167.1">
    <property type="nucleotide sequence ID" value="NC_007954.1"/>
</dbReference>
<dbReference type="SMR" id="Q12HP7"/>
<dbReference type="STRING" id="318161.Sden_3756"/>
<dbReference type="KEGG" id="sdn:Sden_3756"/>
<dbReference type="eggNOG" id="COG0711">
    <property type="taxonomic scope" value="Bacteria"/>
</dbReference>
<dbReference type="HOGENOM" id="CLU_079215_4_5_6"/>
<dbReference type="OrthoDB" id="9788020at2"/>
<dbReference type="Proteomes" id="UP000001982">
    <property type="component" value="Chromosome"/>
</dbReference>
<dbReference type="GO" id="GO:0005886">
    <property type="term" value="C:plasma membrane"/>
    <property type="evidence" value="ECO:0007669"/>
    <property type="project" value="UniProtKB-SubCell"/>
</dbReference>
<dbReference type="GO" id="GO:0045259">
    <property type="term" value="C:proton-transporting ATP synthase complex"/>
    <property type="evidence" value="ECO:0007669"/>
    <property type="project" value="UniProtKB-KW"/>
</dbReference>
<dbReference type="GO" id="GO:0046933">
    <property type="term" value="F:proton-transporting ATP synthase activity, rotational mechanism"/>
    <property type="evidence" value="ECO:0007669"/>
    <property type="project" value="UniProtKB-UniRule"/>
</dbReference>
<dbReference type="GO" id="GO:0046961">
    <property type="term" value="F:proton-transporting ATPase activity, rotational mechanism"/>
    <property type="evidence" value="ECO:0007669"/>
    <property type="project" value="TreeGrafter"/>
</dbReference>
<dbReference type="CDD" id="cd06503">
    <property type="entry name" value="ATP-synt_Fo_b"/>
    <property type="match status" value="1"/>
</dbReference>
<dbReference type="FunFam" id="1.20.5.620:FF:000001">
    <property type="entry name" value="ATP synthase subunit b"/>
    <property type="match status" value="1"/>
</dbReference>
<dbReference type="Gene3D" id="1.20.5.620">
    <property type="entry name" value="F1F0 ATP synthase subunit B, membrane domain"/>
    <property type="match status" value="1"/>
</dbReference>
<dbReference type="HAMAP" id="MF_01398">
    <property type="entry name" value="ATP_synth_b_bprime"/>
    <property type="match status" value="1"/>
</dbReference>
<dbReference type="InterPro" id="IPR028987">
    <property type="entry name" value="ATP_synth_B-like_membr_sf"/>
</dbReference>
<dbReference type="InterPro" id="IPR002146">
    <property type="entry name" value="ATP_synth_b/b'su_bac/chlpt"/>
</dbReference>
<dbReference type="InterPro" id="IPR005864">
    <property type="entry name" value="ATP_synth_F0_bsu_bac"/>
</dbReference>
<dbReference type="InterPro" id="IPR050059">
    <property type="entry name" value="ATP_synthase_B_chain"/>
</dbReference>
<dbReference type="NCBIfam" id="TIGR01144">
    <property type="entry name" value="ATP_synt_b"/>
    <property type="match status" value="1"/>
</dbReference>
<dbReference type="NCBIfam" id="NF004411">
    <property type="entry name" value="PRK05759.1-2"/>
    <property type="match status" value="1"/>
</dbReference>
<dbReference type="NCBIfam" id="NF004413">
    <property type="entry name" value="PRK05759.1-4"/>
    <property type="match status" value="1"/>
</dbReference>
<dbReference type="PANTHER" id="PTHR33445:SF1">
    <property type="entry name" value="ATP SYNTHASE SUBUNIT B"/>
    <property type="match status" value="1"/>
</dbReference>
<dbReference type="PANTHER" id="PTHR33445">
    <property type="entry name" value="ATP SYNTHASE SUBUNIT B', CHLOROPLASTIC"/>
    <property type="match status" value="1"/>
</dbReference>
<dbReference type="Pfam" id="PF00430">
    <property type="entry name" value="ATP-synt_B"/>
    <property type="match status" value="1"/>
</dbReference>
<dbReference type="SUPFAM" id="SSF81573">
    <property type="entry name" value="F1F0 ATP synthase subunit B, membrane domain"/>
    <property type="match status" value="1"/>
</dbReference>